<gene>
    <name evidence="1" type="primary">adk</name>
    <name type="ordered locus">Acel_0327</name>
</gene>
<accession>A0LRP1</accession>
<protein>
    <recommendedName>
        <fullName evidence="1">Adenylate kinase</fullName>
        <shortName evidence="1">AK</shortName>
        <ecNumber evidence="1">2.7.4.3</ecNumber>
    </recommendedName>
    <alternativeName>
        <fullName evidence="1">ATP-AMP transphosphorylase</fullName>
    </alternativeName>
    <alternativeName>
        <fullName evidence="1">ATP:AMP phosphotransferase</fullName>
    </alternativeName>
    <alternativeName>
        <fullName evidence="1">Adenylate monophosphate kinase</fullName>
    </alternativeName>
</protein>
<feature type="chain" id="PRO_1000021704" description="Adenylate kinase">
    <location>
        <begin position="1"/>
        <end position="217"/>
    </location>
</feature>
<feature type="region of interest" description="NMP" evidence="1">
    <location>
        <begin position="30"/>
        <end position="59"/>
    </location>
</feature>
<feature type="region of interest" description="LID" evidence="1">
    <location>
        <begin position="126"/>
        <end position="163"/>
    </location>
</feature>
<feature type="binding site" evidence="1">
    <location>
        <begin position="10"/>
        <end position="15"/>
    </location>
    <ligand>
        <name>ATP</name>
        <dbReference type="ChEBI" id="CHEBI:30616"/>
    </ligand>
</feature>
<feature type="binding site" evidence="1">
    <location>
        <position position="31"/>
    </location>
    <ligand>
        <name>AMP</name>
        <dbReference type="ChEBI" id="CHEBI:456215"/>
    </ligand>
</feature>
<feature type="binding site" evidence="1">
    <location>
        <position position="36"/>
    </location>
    <ligand>
        <name>AMP</name>
        <dbReference type="ChEBI" id="CHEBI:456215"/>
    </ligand>
</feature>
<feature type="binding site" evidence="1">
    <location>
        <begin position="57"/>
        <end position="59"/>
    </location>
    <ligand>
        <name>AMP</name>
        <dbReference type="ChEBI" id="CHEBI:456215"/>
    </ligand>
</feature>
<feature type="binding site" evidence="1">
    <location>
        <begin position="85"/>
        <end position="88"/>
    </location>
    <ligand>
        <name>AMP</name>
        <dbReference type="ChEBI" id="CHEBI:456215"/>
    </ligand>
</feature>
<feature type="binding site" evidence="1">
    <location>
        <position position="92"/>
    </location>
    <ligand>
        <name>AMP</name>
        <dbReference type="ChEBI" id="CHEBI:456215"/>
    </ligand>
</feature>
<feature type="binding site" evidence="1">
    <location>
        <position position="127"/>
    </location>
    <ligand>
        <name>ATP</name>
        <dbReference type="ChEBI" id="CHEBI:30616"/>
    </ligand>
</feature>
<feature type="binding site" evidence="1">
    <location>
        <position position="130"/>
    </location>
    <ligand>
        <name>Zn(2+)</name>
        <dbReference type="ChEBI" id="CHEBI:29105"/>
        <note>structural</note>
    </ligand>
</feature>
<feature type="binding site" evidence="1">
    <location>
        <position position="133"/>
    </location>
    <ligand>
        <name>Zn(2+)</name>
        <dbReference type="ChEBI" id="CHEBI:29105"/>
        <note>structural</note>
    </ligand>
</feature>
<feature type="binding site" evidence="1">
    <location>
        <position position="150"/>
    </location>
    <ligand>
        <name>Zn(2+)</name>
        <dbReference type="ChEBI" id="CHEBI:29105"/>
        <note>structural</note>
    </ligand>
</feature>
<feature type="binding site" evidence="1">
    <location>
        <position position="153"/>
    </location>
    <ligand>
        <name>Zn(2+)</name>
        <dbReference type="ChEBI" id="CHEBI:29105"/>
        <note>structural</note>
    </ligand>
</feature>
<feature type="binding site" evidence="1">
    <location>
        <position position="160"/>
    </location>
    <ligand>
        <name>AMP</name>
        <dbReference type="ChEBI" id="CHEBI:456215"/>
    </ligand>
</feature>
<feature type="binding site" evidence="1">
    <location>
        <position position="171"/>
    </location>
    <ligand>
        <name>AMP</name>
        <dbReference type="ChEBI" id="CHEBI:456215"/>
    </ligand>
</feature>
<feature type="binding site" evidence="1">
    <location>
        <position position="199"/>
    </location>
    <ligand>
        <name>ATP</name>
        <dbReference type="ChEBI" id="CHEBI:30616"/>
    </ligand>
</feature>
<sequence>MRLVLVGPPGAGKGTQAQLIASHLHVPKISTGDIFRKNVADDTPLGRLAKQYMDAGDLVPDEVTIAMVRDRLAGDDVRDGFLLDGFPRTVHQAVELDAMLAEAGARLDVVLELVVDDDEVIRRLSGRRTCADCAHVWHVTYDPPTVDGVCDLCGGKLFQREDDREETVRHRLEVYYQQTAPLIDYYAARGILEGIDAMGPVEEVTARAVAALRHWSR</sequence>
<reference key="1">
    <citation type="journal article" date="2009" name="Genome Res.">
        <title>Complete genome of the cellulolytic thermophile Acidothermus cellulolyticus 11B provides insights into its ecophysiological and evolutionary adaptations.</title>
        <authorList>
            <person name="Barabote R.D."/>
            <person name="Xie G."/>
            <person name="Leu D.H."/>
            <person name="Normand P."/>
            <person name="Necsulea A."/>
            <person name="Daubin V."/>
            <person name="Medigue C."/>
            <person name="Adney W.S."/>
            <person name="Xu X.C."/>
            <person name="Lapidus A."/>
            <person name="Parales R.E."/>
            <person name="Detter C."/>
            <person name="Pujic P."/>
            <person name="Bruce D."/>
            <person name="Lavire C."/>
            <person name="Challacombe J.F."/>
            <person name="Brettin T.S."/>
            <person name="Berry A.M."/>
        </authorList>
    </citation>
    <scope>NUCLEOTIDE SEQUENCE [LARGE SCALE GENOMIC DNA]</scope>
    <source>
        <strain>ATCC 43068 / DSM 8971 / 11B</strain>
    </source>
</reference>
<proteinExistence type="inferred from homology"/>
<dbReference type="EC" id="2.7.4.3" evidence="1"/>
<dbReference type="EMBL" id="CP000481">
    <property type="protein sequence ID" value="ABK52101.1"/>
    <property type="molecule type" value="Genomic_DNA"/>
</dbReference>
<dbReference type="RefSeq" id="WP_011719164.1">
    <property type="nucleotide sequence ID" value="NC_008578.1"/>
</dbReference>
<dbReference type="SMR" id="A0LRP1"/>
<dbReference type="FunCoup" id="A0LRP1">
    <property type="interactions" value="385"/>
</dbReference>
<dbReference type="STRING" id="351607.Acel_0327"/>
<dbReference type="KEGG" id="ace:Acel_0327"/>
<dbReference type="eggNOG" id="COG0563">
    <property type="taxonomic scope" value="Bacteria"/>
</dbReference>
<dbReference type="HOGENOM" id="CLU_032354_1_2_11"/>
<dbReference type="InParanoid" id="A0LRP1"/>
<dbReference type="OrthoDB" id="9805030at2"/>
<dbReference type="UniPathway" id="UPA00588">
    <property type="reaction ID" value="UER00649"/>
</dbReference>
<dbReference type="Proteomes" id="UP000008221">
    <property type="component" value="Chromosome"/>
</dbReference>
<dbReference type="GO" id="GO:0005737">
    <property type="term" value="C:cytoplasm"/>
    <property type="evidence" value="ECO:0007669"/>
    <property type="project" value="UniProtKB-SubCell"/>
</dbReference>
<dbReference type="GO" id="GO:0004017">
    <property type="term" value="F:adenylate kinase activity"/>
    <property type="evidence" value="ECO:0007669"/>
    <property type="project" value="UniProtKB-UniRule"/>
</dbReference>
<dbReference type="GO" id="GO:0005524">
    <property type="term" value="F:ATP binding"/>
    <property type="evidence" value="ECO:0007669"/>
    <property type="project" value="UniProtKB-UniRule"/>
</dbReference>
<dbReference type="GO" id="GO:0008270">
    <property type="term" value="F:zinc ion binding"/>
    <property type="evidence" value="ECO:0007669"/>
    <property type="project" value="UniProtKB-UniRule"/>
</dbReference>
<dbReference type="GO" id="GO:0044209">
    <property type="term" value="P:AMP salvage"/>
    <property type="evidence" value="ECO:0007669"/>
    <property type="project" value="UniProtKB-UniRule"/>
</dbReference>
<dbReference type="CDD" id="cd01428">
    <property type="entry name" value="ADK"/>
    <property type="match status" value="1"/>
</dbReference>
<dbReference type="FunFam" id="3.40.50.300:FF:000106">
    <property type="entry name" value="Adenylate kinase mitochondrial"/>
    <property type="match status" value="1"/>
</dbReference>
<dbReference type="Gene3D" id="3.40.50.300">
    <property type="entry name" value="P-loop containing nucleotide triphosphate hydrolases"/>
    <property type="match status" value="1"/>
</dbReference>
<dbReference type="HAMAP" id="MF_00235">
    <property type="entry name" value="Adenylate_kinase_Adk"/>
    <property type="match status" value="1"/>
</dbReference>
<dbReference type="InterPro" id="IPR006259">
    <property type="entry name" value="Adenyl_kin_sub"/>
</dbReference>
<dbReference type="InterPro" id="IPR000850">
    <property type="entry name" value="Adenylat/UMP-CMP_kin"/>
</dbReference>
<dbReference type="InterPro" id="IPR033690">
    <property type="entry name" value="Adenylat_kinase_CS"/>
</dbReference>
<dbReference type="InterPro" id="IPR007862">
    <property type="entry name" value="Adenylate_kinase_lid-dom"/>
</dbReference>
<dbReference type="InterPro" id="IPR027417">
    <property type="entry name" value="P-loop_NTPase"/>
</dbReference>
<dbReference type="NCBIfam" id="TIGR01351">
    <property type="entry name" value="adk"/>
    <property type="match status" value="1"/>
</dbReference>
<dbReference type="NCBIfam" id="NF001380">
    <property type="entry name" value="PRK00279.1-2"/>
    <property type="match status" value="1"/>
</dbReference>
<dbReference type="NCBIfam" id="NF001381">
    <property type="entry name" value="PRK00279.1-3"/>
    <property type="match status" value="1"/>
</dbReference>
<dbReference type="NCBIfam" id="NF011100">
    <property type="entry name" value="PRK14527.1"/>
    <property type="match status" value="1"/>
</dbReference>
<dbReference type="PANTHER" id="PTHR23359">
    <property type="entry name" value="NUCLEOTIDE KINASE"/>
    <property type="match status" value="1"/>
</dbReference>
<dbReference type="Pfam" id="PF00406">
    <property type="entry name" value="ADK"/>
    <property type="match status" value="1"/>
</dbReference>
<dbReference type="Pfam" id="PF05191">
    <property type="entry name" value="ADK_lid"/>
    <property type="match status" value="1"/>
</dbReference>
<dbReference type="PRINTS" id="PR00094">
    <property type="entry name" value="ADENYLTKNASE"/>
</dbReference>
<dbReference type="SUPFAM" id="SSF52540">
    <property type="entry name" value="P-loop containing nucleoside triphosphate hydrolases"/>
    <property type="match status" value="1"/>
</dbReference>
<dbReference type="PROSITE" id="PS00113">
    <property type="entry name" value="ADENYLATE_KINASE"/>
    <property type="match status" value="1"/>
</dbReference>
<name>KAD_ACIC1</name>
<keyword id="KW-0067">ATP-binding</keyword>
<keyword id="KW-0963">Cytoplasm</keyword>
<keyword id="KW-0418">Kinase</keyword>
<keyword id="KW-0479">Metal-binding</keyword>
<keyword id="KW-0545">Nucleotide biosynthesis</keyword>
<keyword id="KW-0547">Nucleotide-binding</keyword>
<keyword id="KW-1185">Reference proteome</keyword>
<keyword id="KW-0808">Transferase</keyword>
<keyword id="KW-0862">Zinc</keyword>
<evidence type="ECO:0000255" key="1">
    <source>
        <dbReference type="HAMAP-Rule" id="MF_00235"/>
    </source>
</evidence>
<comment type="function">
    <text evidence="1">Catalyzes the reversible transfer of the terminal phosphate group between ATP and AMP. Plays an important role in cellular energy homeostasis and in adenine nucleotide metabolism.</text>
</comment>
<comment type="catalytic activity">
    <reaction evidence="1">
        <text>AMP + ATP = 2 ADP</text>
        <dbReference type="Rhea" id="RHEA:12973"/>
        <dbReference type="ChEBI" id="CHEBI:30616"/>
        <dbReference type="ChEBI" id="CHEBI:456215"/>
        <dbReference type="ChEBI" id="CHEBI:456216"/>
        <dbReference type="EC" id="2.7.4.3"/>
    </reaction>
</comment>
<comment type="pathway">
    <text evidence="1">Purine metabolism; AMP biosynthesis via salvage pathway; AMP from ADP: step 1/1.</text>
</comment>
<comment type="subunit">
    <text evidence="1">Monomer.</text>
</comment>
<comment type="subcellular location">
    <subcellularLocation>
        <location evidence="1">Cytoplasm</location>
    </subcellularLocation>
</comment>
<comment type="domain">
    <text evidence="1">Consists of three domains, a large central CORE domain and two small peripheral domains, NMPbind and LID, which undergo movements during catalysis. The LID domain closes over the site of phosphoryl transfer upon ATP binding. Assembling and dissambling the active center during each catalytic cycle provides an effective means to prevent ATP hydrolysis. Some bacteria have evolved a zinc-coordinating structure that stabilizes the LID domain.</text>
</comment>
<comment type="similarity">
    <text evidence="1">Belongs to the adenylate kinase family.</text>
</comment>
<organism>
    <name type="scientific">Acidothermus cellulolyticus (strain ATCC 43068 / DSM 8971 / 11B)</name>
    <dbReference type="NCBI Taxonomy" id="351607"/>
    <lineage>
        <taxon>Bacteria</taxon>
        <taxon>Bacillati</taxon>
        <taxon>Actinomycetota</taxon>
        <taxon>Actinomycetes</taxon>
        <taxon>Acidothermales</taxon>
        <taxon>Acidothermaceae</taxon>
        <taxon>Acidothermus</taxon>
    </lineage>
</organism>